<gene>
    <name type="ordered locus">RC1023</name>
</gene>
<organism>
    <name type="scientific">Rickettsia conorii (strain ATCC VR-613 / Malish 7)</name>
    <dbReference type="NCBI Taxonomy" id="272944"/>
    <lineage>
        <taxon>Bacteria</taxon>
        <taxon>Pseudomonadati</taxon>
        <taxon>Pseudomonadota</taxon>
        <taxon>Alphaproteobacteria</taxon>
        <taxon>Rickettsiales</taxon>
        <taxon>Rickettsiaceae</taxon>
        <taxon>Rickettsieae</taxon>
        <taxon>Rickettsia</taxon>
        <taxon>spotted fever group</taxon>
    </lineage>
</organism>
<name>Y1023_RICCN</name>
<keyword id="KW-0732">Signal</keyword>
<evidence type="ECO:0000255" key="1"/>
<protein>
    <recommendedName>
        <fullName>Uncharacterized protein RC1023</fullName>
    </recommendedName>
</protein>
<proteinExistence type="inferred from homology"/>
<feature type="signal peptide" evidence="1">
    <location>
        <begin position="1"/>
        <end position="19"/>
    </location>
</feature>
<feature type="chain" id="PRO_0000277652" description="Uncharacterized protein RC1023">
    <location>
        <begin position="20"/>
        <end position="295"/>
    </location>
</feature>
<accession>Q92GU9</accession>
<reference key="1">
    <citation type="journal article" date="2001" name="Science">
        <title>Mechanisms of evolution in Rickettsia conorii and R. prowazekii.</title>
        <authorList>
            <person name="Ogata H."/>
            <person name="Audic S."/>
            <person name="Renesto-Audiffren P."/>
            <person name="Fournier P.-E."/>
            <person name="Barbe V."/>
            <person name="Samson D."/>
            <person name="Roux V."/>
            <person name="Cossart P."/>
            <person name="Weissenbach J."/>
            <person name="Claverie J.-M."/>
            <person name="Raoult D."/>
        </authorList>
    </citation>
    <scope>NUCLEOTIDE SEQUENCE [LARGE SCALE GENOMIC DNA]</scope>
    <source>
        <strain>ATCC VR-613 / Malish 7</strain>
    </source>
</reference>
<dbReference type="EMBL" id="AE006914">
    <property type="protein sequence ID" value="AAL03561.1"/>
    <property type="molecule type" value="Genomic_DNA"/>
</dbReference>
<dbReference type="PIR" id="G97827">
    <property type="entry name" value="G97827"/>
</dbReference>
<dbReference type="RefSeq" id="WP_004997756.1">
    <property type="nucleotide sequence ID" value="NC_003103.1"/>
</dbReference>
<dbReference type="SMR" id="Q92GU9"/>
<dbReference type="KEGG" id="rco:RC1023"/>
<dbReference type="HOGENOM" id="CLU_942947_0_0_5"/>
<dbReference type="Proteomes" id="UP000000816">
    <property type="component" value="Chromosome"/>
</dbReference>
<dbReference type="Gene3D" id="1.10.4030.10">
    <property type="entry name" value="Porin chaperone SurA, peptide-binding domain"/>
    <property type="match status" value="1"/>
</dbReference>
<dbReference type="InterPro" id="IPR050280">
    <property type="entry name" value="OMP_Chaperone_SurA"/>
</dbReference>
<dbReference type="InterPro" id="IPR027304">
    <property type="entry name" value="Trigger_fact/SurA_dom_sf"/>
</dbReference>
<dbReference type="PANTHER" id="PTHR47637">
    <property type="entry name" value="CHAPERONE SURA"/>
    <property type="match status" value="1"/>
</dbReference>
<dbReference type="PANTHER" id="PTHR47637:SF1">
    <property type="entry name" value="CHAPERONE SURA"/>
    <property type="match status" value="1"/>
</dbReference>
<dbReference type="Pfam" id="PF13624">
    <property type="entry name" value="SurA_N_3"/>
    <property type="match status" value="1"/>
</dbReference>
<dbReference type="SUPFAM" id="SSF109998">
    <property type="entry name" value="Triger factor/SurA peptide-binding domain-like"/>
    <property type="match status" value="1"/>
</dbReference>
<sequence>MRKLLLIITVFFTFNVAQASLPNIVASVNDEPITLNEFRARKKMIMALNNVESLTPAQDKQLSDLALKSLIDESLLFQYAGDREIPQEEIENAIKSIEDRNKMPHGSLLQYLKSRSVNPDSFISQIKSELIKMNILSSLSRSVQVSNKEIDVAILSSDQKDVEISMQVFTSKDGGNKAFTQMNNLKNRLKKCADVKKSLYDNFATMQIITDKLSKIEGVKQTIVKDLTPDKASNVFEVNNKFEITLVCSKKILNVNEDENNYVVNFLTNKKISQKAQKMFENMRKKAAIKIMLPS</sequence>